<accession>Q43292</accession>
<accession>Q9C822</accession>
<comment type="function">
    <text evidence="1">Binds to the 23S rRNA.</text>
</comment>
<comment type="cofactor">
    <cofactor evidence="1">
        <name>Zn(2+)</name>
        <dbReference type="ChEBI" id="CHEBI:29105"/>
    </cofactor>
    <text evidence="1">Binds 1 zinc ion per subunit.</text>
</comment>
<comment type="similarity">
    <text evidence="4">Belongs to the eukaryotic ribosomal protein eL37 family.</text>
</comment>
<organism>
    <name type="scientific">Arabidopsis thaliana</name>
    <name type="common">Mouse-ear cress</name>
    <dbReference type="NCBI Taxonomy" id="3702"/>
    <lineage>
        <taxon>Eukaryota</taxon>
        <taxon>Viridiplantae</taxon>
        <taxon>Streptophyta</taxon>
        <taxon>Embryophyta</taxon>
        <taxon>Tracheophyta</taxon>
        <taxon>Spermatophyta</taxon>
        <taxon>Magnoliopsida</taxon>
        <taxon>eudicotyledons</taxon>
        <taxon>Gunneridae</taxon>
        <taxon>Pentapetalae</taxon>
        <taxon>rosids</taxon>
        <taxon>malvids</taxon>
        <taxon>Brassicales</taxon>
        <taxon>Brassicaceae</taxon>
        <taxon>Camelineae</taxon>
        <taxon>Arabidopsis</taxon>
    </lineage>
</organism>
<gene>
    <name type="primary">RPL37B</name>
    <name type="ordered locus">At1g52300</name>
    <name type="ORF">F19K6.12</name>
</gene>
<reference key="1">
    <citation type="journal article" date="2000" name="Nature">
        <title>Sequence and analysis of chromosome 1 of the plant Arabidopsis thaliana.</title>
        <authorList>
            <person name="Theologis A."/>
            <person name="Ecker J.R."/>
            <person name="Palm C.J."/>
            <person name="Federspiel N.A."/>
            <person name="Kaul S."/>
            <person name="White O."/>
            <person name="Alonso J."/>
            <person name="Altafi H."/>
            <person name="Araujo R."/>
            <person name="Bowman C.L."/>
            <person name="Brooks S.Y."/>
            <person name="Buehler E."/>
            <person name="Chan A."/>
            <person name="Chao Q."/>
            <person name="Chen H."/>
            <person name="Cheuk R.F."/>
            <person name="Chin C.W."/>
            <person name="Chung M.K."/>
            <person name="Conn L."/>
            <person name="Conway A.B."/>
            <person name="Conway A.R."/>
            <person name="Creasy T.H."/>
            <person name="Dewar K."/>
            <person name="Dunn P."/>
            <person name="Etgu P."/>
            <person name="Feldblyum T.V."/>
            <person name="Feng J.-D."/>
            <person name="Fong B."/>
            <person name="Fujii C.Y."/>
            <person name="Gill J.E."/>
            <person name="Goldsmith A.D."/>
            <person name="Haas B."/>
            <person name="Hansen N.F."/>
            <person name="Hughes B."/>
            <person name="Huizar L."/>
            <person name="Hunter J.L."/>
            <person name="Jenkins J."/>
            <person name="Johnson-Hopson C."/>
            <person name="Khan S."/>
            <person name="Khaykin E."/>
            <person name="Kim C.J."/>
            <person name="Koo H.L."/>
            <person name="Kremenetskaia I."/>
            <person name="Kurtz D.B."/>
            <person name="Kwan A."/>
            <person name="Lam B."/>
            <person name="Langin-Hooper S."/>
            <person name="Lee A."/>
            <person name="Lee J.M."/>
            <person name="Lenz C.A."/>
            <person name="Li J.H."/>
            <person name="Li Y.-P."/>
            <person name="Lin X."/>
            <person name="Liu S.X."/>
            <person name="Liu Z.A."/>
            <person name="Luros J.S."/>
            <person name="Maiti R."/>
            <person name="Marziali A."/>
            <person name="Militscher J."/>
            <person name="Miranda M."/>
            <person name="Nguyen M."/>
            <person name="Nierman W.C."/>
            <person name="Osborne B.I."/>
            <person name="Pai G."/>
            <person name="Peterson J."/>
            <person name="Pham P.K."/>
            <person name="Rizzo M."/>
            <person name="Rooney T."/>
            <person name="Rowley D."/>
            <person name="Sakano H."/>
            <person name="Salzberg S.L."/>
            <person name="Schwartz J.R."/>
            <person name="Shinn P."/>
            <person name="Southwick A.M."/>
            <person name="Sun H."/>
            <person name="Tallon L.J."/>
            <person name="Tambunga G."/>
            <person name="Toriumi M.J."/>
            <person name="Town C.D."/>
            <person name="Utterback T."/>
            <person name="Van Aken S."/>
            <person name="Vaysberg M."/>
            <person name="Vysotskaia V.S."/>
            <person name="Walker M."/>
            <person name="Wu D."/>
            <person name="Yu G."/>
            <person name="Fraser C.M."/>
            <person name="Venter J.C."/>
            <person name="Davis R.W."/>
        </authorList>
    </citation>
    <scope>NUCLEOTIDE SEQUENCE [LARGE SCALE GENOMIC DNA]</scope>
    <source>
        <strain>cv. Columbia</strain>
    </source>
</reference>
<reference key="2">
    <citation type="journal article" date="2017" name="Plant J.">
        <title>Araport11: a complete reannotation of the Arabidopsis thaliana reference genome.</title>
        <authorList>
            <person name="Cheng C.Y."/>
            <person name="Krishnakumar V."/>
            <person name="Chan A.P."/>
            <person name="Thibaud-Nissen F."/>
            <person name="Schobel S."/>
            <person name="Town C.D."/>
        </authorList>
    </citation>
    <scope>GENOME REANNOTATION</scope>
    <source>
        <strain>cv. Columbia</strain>
    </source>
</reference>
<reference key="3">
    <citation type="journal article" date="2003" name="Science">
        <title>Empirical analysis of transcriptional activity in the Arabidopsis genome.</title>
        <authorList>
            <person name="Yamada K."/>
            <person name="Lim J."/>
            <person name="Dale J.M."/>
            <person name="Chen H."/>
            <person name="Shinn P."/>
            <person name="Palm C.J."/>
            <person name="Southwick A.M."/>
            <person name="Wu H.C."/>
            <person name="Kim C.J."/>
            <person name="Nguyen M."/>
            <person name="Pham P.K."/>
            <person name="Cheuk R.F."/>
            <person name="Karlin-Newmann G."/>
            <person name="Liu S.X."/>
            <person name="Lam B."/>
            <person name="Sakano H."/>
            <person name="Wu T."/>
            <person name="Yu G."/>
            <person name="Miranda M."/>
            <person name="Quach H.L."/>
            <person name="Tripp M."/>
            <person name="Chang C.H."/>
            <person name="Lee J.M."/>
            <person name="Toriumi M.J."/>
            <person name="Chan M.M."/>
            <person name="Tang C.C."/>
            <person name="Onodera C.S."/>
            <person name="Deng J.M."/>
            <person name="Akiyama K."/>
            <person name="Ansari Y."/>
            <person name="Arakawa T."/>
            <person name="Banh J."/>
            <person name="Banno F."/>
            <person name="Bowser L."/>
            <person name="Brooks S.Y."/>
            <person name="Carninci P."/>
            <person name="Chao Q."/>
            <person name="Choy N."/>
            <person name="Enju A."/>
            <person name="Goldsmith A.D."/>
            <person name="Gurjal M."/>
            <person name="Hansen N.F."/>
            <person name="Hayashizaki Y."/>
            <person name="Johnson-Hopson C."/>
            <person name="Hsuan V.W."/>
            <person name="Iida K."/>
            <person name="Karnes M."/>
            <person name="Khan S."/>
            <person name="Koesema E."/>
            <person name="Ishida J."/>
            <person name="Jiang P.X."/>
            <person name="Jones T."/>
            <person name="Kawai J."/>
            <person name="Kamiya A."/>
            <person name="Meyers C."/>
            <person name="Nakajima M."/>
            <person name="Narusaka M."/>
            <person name="Seki M."/>
            <person name="Sakurai T."/>
            <person name="Satou M."/>
            <person name="Tamse R."/>
            <person name="Vaysberg M."/>
            <person name="Wallender E.K."/>
            <person name="Wong C."/>
            <person name="Yamamura Y."/>
            <person name="Yuan S."/>
            <person name="Shinozaki K."/>
            <person name="Davis R.W."/>
            <person name="Theologis A."/>
            <person name="Ecker J.R."/>
        </authorList>
    </citation>
    <scope>NUCLEOTIDE SEQUENCE [LARGE SCALE MRNA]</scope>
    <source>
        <strain>cv. Columbia</strain>
    </source>
</reference>
<reference key="4">
    <citation type="journal article" date="1996" name="Plant J.">
        <title>Further progress towards a catalogue of all Arabidopsis genes: analysis of a set of 5000 non-redundant ESTs.</title>
        <authorList>
            <person name="Cooke R."/>
            <person name="Raynal M."/>
            <person name="Laudie M."/>
            <person name="Grellet F."/>
            <person name="Delseny M."/>
            <person name="Morris P.-C."/>
            <person name="Guerrier D."/>
            <person name="Giraudat J."/>
            <person name="Quigley F."/>
            <person name="Clabault G."/>
            <person name="Li Y.-F."/>
            <person name="Mache R."/>
            <person name="Krivitzky M."/>
            <person name="Gy I.J.-J."/>
            <person name="Kreis M."/>
            <person name="Lecharny A."/>
            <person name="Parmentier Y."/>
            <person name="Marbach J."/>
            <person name="Fleck J."/>
            <person name="Clement B."/>
            <person name="Philipps G."/>
            <person name="Herve C."/>
            <person name="Bardet C."/>
            <person name="Tremousaygue D."/>
            <person name="Lescure B."/>
            <person name="Lacomme C."/>
            <person name="Roby D."/>
            <person name="Jourjon M.-F."/>
            <person name="Chabrier P."/>
            <person name="Charpenteau J.-L."/>
            <person name="Desprez T."/>
            <person name="Amselem J."/>
            <person name="Chiapello H."/>
            <person name="Hoefte H."/>
        </authorList>
    </citation>
    <scope>NUCLEOTIDE SEQUENCE [LARGE SCALE MRNA]</scope>
    <source>
        <strain>cv. Columbia</strain>
    </source>
</reference>
<reference key="5">
    <citation type="journal article" date="2001" name="Plant Physiol.">
        <title>The organization of cytoplasmic ribosomal protein genes in the Arabidopsis genome.</title>
        <authorList>
            <person name="Barakat A."/>
            <person name="Szick-Miranda K."/>
            <person name="Chang I.-F."/>
            <person name="Guyot R."/>
            <person name="Blanc G."/>
            <person name="Cooke R."/>
            <person name="Delseny M."/>
            <person name="Bailey-Serres J."/>
        </authorList>
    </citation>
    <scope>GENE FAMILY ORGANIZATION</scope>
    <scope>NOMENCLATURE</scope>
</reference>
<reference key="6">
    <citation type="journal article" date="2023" name="Plant Cell">
        <title>An updated nomenclature for plant ribosomal protein genes.</title>
        <authorList>
            <person name="Scarpin M.R."/>
            <person name="Busche M."/>
            <person name="Martinez R.E."/>
            <person name="Harper L.C."/>
            <person name="Reiser L."/>
            <person name="Szakonyi D."/>
            <person name="Merchante C."/>
            <person name="Lan T."/>
            <person name="Xiong W."/>
            <person name="Mo B."/>
            <person name="Tang G."/>
            <person name="Chen X."/>
            <person name="Bailey-Serres J."/>
            <person name="Browning K.S."/>
            <person name="Brunkard J.O."/>
        </authorList>
    </citation>
    <scope>NOMENCLATURE</scope>
</reference>
<feature type="chain" id="PRO_0000139716" description="Large ribosomal subunit protein eL37y">
    <location>
        <begin position="1"/>
        <end position="95"/>
    </location>
</feature>
<feature type="zinc finger region" description="C4-type" evidence="2">
    <location>
        <begin position="19"/>
        <end position="37"/>
    </location>
</feature>
<feature type="binding site" evidence="1">
    <location>
        <position position="19"/>
    </location>
    <ligand>
        <name>Zn(2+)</name>
        <dbReference type="ChEBI" id="CHEBI:29105"/>
    </ligand>
</feature>
<feature type="binding site" evidence="1">
    <location>
        <position position="22"/>
    </location>
    <ligand>
        <name>Zn(2+)</name>
        <dbReference type="ChEBI" id="CHEBI:29105"/>
    </ligand>
</feature>
<feature type="binding site" evidence="1">
    <location>
        <position position="34"/>
    </location>
    <ligand>
        <name>Zn(2+)</name>
        <dbReference type="ChEBI" id="CHEBI:29105"/>
    </ligand>
</feature>
<feature type="binding site" evidence="1">
    <location>
        <position position="37"/>
    </location>
    <ligand>
        <name>Zn(2+)</name>
        <dbReference type="ChEBI" id="CHEBI:29105"/>
    </ligand>
</feature>
<feature type="sequence conflict" description="In Ref. 4; CAA23381." evidence="4" ref="4">
    <original>T</original>
    <variation>G</variation>
    <location>
        <position position="2"/>
    </location>
</feature>
<feature type="sequence conflict" description="In Ref. 4; CAA23381." evidence="4" ref="4">
    <original>G</original>
    <variation>A</variation>
    <location>
        <position position="6"/>
    </location>
</feature>
<feature type="sequence conflict" description="In Ref. 4; CAA23381." evidence="4" ref="4">
    <original>G</original>
    <variation>C</variation>
    <location>
        <position position="77"/>
    </location>
</feature>
<feature type="sequence conflict" description="In Ref. 4; CAA23381." evidence="4" ref="4">
    <original>EAK</original>
    <variation>QAT</variation>
    <location>
        <begin position="83"/>
        <end position="85"/>
    </location>
</feature>
<feature type="sequence conflict" description="In Ref. 4; CAA23381." evidence="4" ref="4">
    <original>GV</original>
    <variation>AA</variation>
    <location>
        <begin position="90"/>
        <end position="91"/>
    </location>
</feature>
<feature type="sequence conflict" description="In Ref. 4; CAA23381." evidence="4" ref="4">
    <original>A</original>
    <variation>S</variation>
    <location>
        <position position="95"/>
    </location>
</feature>
<dbReference type="EMBL" id="AC037424">
    <property type="protein sequence ID" value="AAG51542.1"/>
    <property type="molecule type" value="Genomic_DNA"/>
</dbReference>
<dbReference type="EMBL" id="CP002684">
    <property type="protein sequence ID" value="AEE32779.1"/>
    <property type="molecule type" value="Genomic_DNA"/>
</dbReference>
<dbReference type="EMBL" id="AF370216">
    <property type="protein sequence ID" value="AAK44031.1"/>
    <property type="molecule type" value="mRNA"/>
</dbReference>
<dbReference type="EMBL" id="AY113921">
    <property type="protein sequence ID" value="AAM44969.1"/>
    <property type="molecule type" value="mRNA"/>
</dbReference>
<dbReference type="EMBL" id="F20017">
    <property type="protein sequence ID" value="CAA23381.1"/>
    <property type="molecule type" value="mRNA"/>
</dbReference>
<dbReference type="PIR" id="B96563">
    <property type="entry name" value="B96563"/>
</dbReference>
<dbReference type="RefSeq" id="NP_175640.1">
    <property type="nucleotide sequence ID" value="NM_104109.2"/>
</dbReference>
<dbReference type="SMR" id="Q43292"/>
<dbReference type="BioGRID" id="26885">
    <property type="interactions" value="62"/>
</dbReference>
<dbReference type="FunCoup" id="Q43292">
    <property type="interactions" value="1960"/>
</dbReference>
<dbReference type="STRING" id="3702.Q43292"/>
<dbReference type="PaxDb" id="3702-AT1G52300.1"/>
<dbReference type="EnsemblPlants" id="AT1G52300.1">
    <property type="protein sequence ID" value="AT1G52300.1"/>
    <property type="gene ID" value="AT1G52300"/>
</dbReference>
<dbReference type="GeneID" id="841660"/>
<dbReference type="Gramene" id="AT1G52300.1">
    <property type="protein sequence ID" value="AT1G52300.1"/>
    <property type="gene ID" value="AT1G52300"/>
</dbReference>
<dbReference type="KEGG" id="ath:AT1G52300"/>
<dbReference type="Araport" id="AT1G52300"/>
<dbReference type="TAIR" id="AT1G52300"/>
<dbReference type="eggNOG" id="KOG3475">
    <property type="taxonomic scope" value="Eukaryota"/>
</dbReference>
<dbReference type="HOGENOM" id="CLU_150908_0_0_1"/>
<dbReference type="InParanoid" id="Q43292"/>
<dbReference type="OMA" id="ITHHRFR"/>
<dbReference type="OrthoDB" id="1033502at2759"/>
<dbReference type="PhylomeDB" id="Q43292"/>
<dbReference type="PRO" id="PR:Q43292"/>
<dbReference type="Proteomes" id="UP000006548">
    <property type="component" value="Chromosome 1"/>
</dbReference>
<dbReference type="ExpressionAtlas" id="Q43292">
    <property type="expression patterns" value="baseline and differential"/>
</dbReference>
<dbReference type="GO" id="GO:0022626">
    <property type="term" value="C:cytosolic ribosome"/>
    <property type="evidence" value="ECO:0007005"/>
    <property type="project" value="TAIR"/>
</dbReference>
<dbReference type="GO" id="GO:0005634">
    <property type="term" value="C:nucleus"/>
    <property type="evidence" value="ECO:0007005"/>
    <property type="project" value="TAIR"/>
</dbReference>
<dbReference type="GO" id="GO:1990904">
    <property type="term" value="C:ribonucleoprotein complex"/>
    <property type="evidence" value="ECO:0007669"/>
    <property type="project" value="UniProtKB-KW"/>
</dbReference>
<dbReference type="GO" id="GO:0003729">
    <property type="term" value="F:mRNA binding"/>
    <property type="evidence" value="ECO:0000314"/>
    <property type="project" value="TAIR"/>
</dbReference>
<dbReference type="GO" id="GO:0019843">
    <property type="term" value="F:rRNA binding"/>
    <property type="evidence" value="ECO:0007669"/>
    <property type="project" value="UniProtKB-KW"/>
</dbReference>
<dbReference type="GO" id="GO:0003735">
    <property type="term" value="F:structural constituent of ribosome"/>
    <property type="evidence" value="ECO:0007669"/>
    <property type="project" value="InterPro"/>
</dbReference>
<dbReference type="GO" id="GO:0008270">
    <property type="term" value="F:zinc ion binding"/>
    <property type="evidence" value="ECO:0007669"/>
    <property type="project" value="UniProtKB-KW"/>
</dbReference>
<dbReference type="GO" id="GO:0006412">
    <property type="term" value="P:translation"/>
    <property type="evidence" value="ECO:0007669"/>
    <property type="project" value="InterPro"/>
</dbReference>
<dbReference type="FunFam" id="2.20.25.30:FF:000001">
    <property type="entry name" value="Ribosomal protein L37"/>
    <property type="match status" value="1"/>
</dbReference>
<dbReference type="Gene3D" id="2.20.25.30">
    <property type="match status" value="1"/>
</dbReference>
<dbReference type="InterPro" id="IPR001569">
    <property type="entry name" value="Ribosomal_eL37"/>
</dbReference>
<dbReference type="InterPro" id="IPR011331">
    <property type="entry name" value="Ribosomal_eL37/eL43"/>
</dbReference>
<dbReference type="InterPro" id="IPR018267">
    <property type="entry name" value="Ribosomal_eL37_CS"/>
</dbReference>
<dbReference type="InterPro" id="IPR011332">
    <property type="entry name" value="Ribosomal_zn-bd"/>
</dbReference>
<dbReference type="PANTHER" id="PTHR10768">
    <property type="entry name" value="60S RIBOSOMAL PROTEIN L37"/>
    <property type="match status" value="1"/>
</dbReference>
<dbReference type="PANTHER" id="PTHR10768:SF25">
    <property type="entry name" value="LARGE RIBOSOMAL SUBUNIT PROTEIN EL37X-RELATED"/>
    <property type="match status" value="1"/>
</dbReference>
<dbReference type="Pfam" id="PF01907">
    <property type="entry name" value="Ribosomal_L37e"/>
    <property type="match status" value="1"/>
</dbReference>
<dbReference type="SUPFAM" id="SSF57829">
    <property type="entry name" value="Zn-binding ribosomal proteins"/>
    <property type="match status" value="1"/>
</dbReference>
<dbReference type="PROSITE" id="PS01077">
    <property type="entry name" value="RIBOSOMAL_L37E"/>
    <property type="match status" value="1"/>
</dbReference>
<proteinExistence type="inferred from homology"/>
<name>RL372_ARATH</name>
<sequence>MTKGTGSFGKRRNKSHTLCVRCGRRSFHIQKSRCSACAYPAARKRTYNWSVKAIRRKTTGTGRMRYLRNVPRRFKTGFREGTEAKPRNKGVASSA</sequence>
<evidence type="ECO:0000250" key="1"/>
<evidence type="ECO:0000255" key="2"/>
<evidence type="ECO:0000303" key="3">
    <source>
    </source>
</evidence>
<evidence type="ECO:0000305" key="4"/>
<keyword id="KW-0479">Metal-binding</keyword>
<keyword id="KW-1185">Reference proteome</keyword>
<keyword id="KW-0687">Ribonucleoprotein</keyword>
<keyword id="KW-0689">Ribosomal protein</keyword>
<keyword id="KW-0694">RNA-binding</keyword>
<keyword id="KW-0699">rRNA-binding</keyword>
<keyword id="KW-0862">Zinc</keyword>
<keyword id="KW-0863">Zinc-finger</keyword>
<protein>
    <recommendedName>
        <fullName evidence="3">Large ribosomal subunit protein eL37y</fullName>
    </recommendedName>
    <alternativeName>
        <fullName>60S ribosomal protein L37-2</fullName>
    </alternativeName>
</protein>